<evidence type="ECO:0000255" key="1">
    <source>
        <dbReference type="HAMAP-Rule" id="MF_01217"/>
    </source>
</evidence>
<evidence type="ECO:0000255" key="2">
    <source>
        <dbReference type="PROSITE-ProRule" id="PRU00258"/>
    </source>
</evidence>
<comment type="function">
    <text evidence="1">Carrier of the growing fatty acid chain in fatty acid biosynthesis.</text>
</comment>
<comment type="pathway">
    <text evidence="1">Lipid metabolism; fatty acid biosynthesis.</text>
</comment>
<comment type="subcellular location">
    <subcellularLocation>
        <location evidence="1">Cytoplasm</location>
    </subcellularLocation>
</comment>
<comment type="PTM">
    <text evidence="1">4'-phosphopantetheine is transferred from CoA to a specific serine of apo-ACP by AcpS. This modification is essential for activity because fatty acids are bound in thioester linkage to the sulfhydryl of the prosthetic group.</text>
</comment>
<comment type="similarity">
    <text evidence="1">Belongs to the acyl carrier protein (ACP) family.</text>
</comment>
<sequence>MSTIEESVKSIIAEQLGVKKEEVTNNASFVDDLGADSLDTVELVMALEEEFDTEIPDEEAEKITTVQAAIDFIKESKK</sequence>
<accession>Q8D3A9</accession>
<dbReference type="EMBL" id="BA000021">
    <property type="protein sequence ID" value="BAC24238.1"/>
    <property type="molecule type" value="Genomic_DNA"/>
</dbReference>
<dbReference type="SMR" id="Q8D3A9"/>
<dbReference type="STRING" id="36870.gene:10368570"/>
<dbReference type="KEGG" id="wbr:acpP"/>
<dbReference type="eggNOG" id="COG0236">
    <property type="taxonomic scope" value="Bacteria"/>
</dbReference>
<dbReference type="HOGENOM" id="CLU_108696_5_1_6"/>
<dbReference type="OrthoDB" id="9804551at2"/>
<dbReference type="UniPathway" id="UPA00094"/>
<dbReference type="Proteomes" id="UP000000562">
    <property type="component" value="Chromosome"/>
</dbReference>
<dbReference type="GO" id="GO:0005829">
    <property type="term" value="C:cytosol"/>
    <property type="evidence" value="ECO:0007669"/>
    <property type="project" value="TreeGrafter"/>
</dbReference>
<dbReference type="GO" id="GO:0016020">
    <property type="term" value="C:membrane"/>
    <property type="evidence" value="ECO:0007669"/>
    <property type="project" value="GOC"/>
</dbReference>
<dbReference type="GO" id="GO:0000035">
    <property type="term" value="F:acyl binding"/>
    <property type="evidence" value="ECO:0007669"/>
    <property type="project" value="TreeGrafter"/>
</dbReference>
<dbReference type="GO" id="GO:0000036">
    <property type="term" value="F:acyl carrier activity"/>
    <property type="evidence" value="ECO:0007669"/>
    <property type="project" value="UniProtKB-UniRule"/>
</dbReference>
<dbReference type="GO" id="GO:0009245">
    <property type="term" value="P:lipid A biosynthetic process"/>
    <property type="evidence" value="ECO:0007669"/>
    <property type="project" value="TreeGrafter"/>
</dbReference>
<dbReference type="FunFam" id="1.10.1200.10:FF:000001">
    <property type="entry name" value="Acyl carrier protein"/>
    <property type="match status" value="1"/>
</dbReference>
<dbReference type="Gene3D" id="1.10.1200.10">
    <property type="entry name" value="ACP-like"/>
    <property type="match status" value="1"/>
</dbReference>
<dbReference type="HAMAP" id="MF_01217">
    <property type="entry name" value="Acyl_carrier"/>
    <property type="match status" value="1"/>
</dbReference>
<dbReference type="InterPro" id="IPR003231">
    <property type="entry name" value="ACP"/>
</dbReference>
<dbReference type="InterPro" id="IPR036736">
    <property type="entry name" value="ACP-like_sf"/>
</dbReference>
<dbReference type="InterPro" id="IPR009081">
    <property type="entry name" value="PP-bd_ACP"/>
</dbReference>
<dbReference type="InterPro" id="IPR006162">
    <property type="entry name" value="Ppantetheine_attach_site"/>
</dbReference>
<dbReference type="NCBIfam" id="TIGR00517">
    <property type="entry name" value="acyl_carrier"/>
    <property type="match status" value="1"/>
</dbReference>
<dbReference type="NCBIfam" id="NF002148">
    <property type="entry name" value="PRK00982.1-2"/>
    <property type="match status" value="1"/>
</dbReference>
<dbReference type="NCBIfam" id="NF002149">
    <property type="entry name" value="PRK00982.1-3"/>
    <property type="match status" value="1"/>
</dbReference>
<dbReference type="NCBIfam" id="NF002150">
    <property type="entry name" value="PRK00982.1-4"/>
    <property type="match status" value="1"/>
</dbReference>
<dbReference type="NCBIfam" id="NF002151">
    <property type="entry name" value="PRK00982.1-5"/>
    <property type="match status" value="1"/>
</dbReference>
<dbReference type="PANTHER" id="PTHR20863">
    <property type="entry name" value="ACYL CARRIER PROTEIN"/>
    <property type="match status" value="1"/>
</dbReference>
<dbReference type="PANTHER" id="PTHR20863:SF76">
    <property type="entry name" value="CARRIER DOMAIN-CONTAINING PROTEIN"/>
    <property type="match status" value="1"/>
</dbReference>
<dbReference type="Pfam" id="PF00550">
    <property type="entry name" value="PP-binding"/>
    <property type="match status" value="1"/>
</dbReference>
<dbReference type="SUPFAM" id="SSF47336">
    <property type="entry name" value="ACP-like"/>
    <property type="match status" value="1"/>
</dbReference>
<dbReference type="PROSITE" id="PS50075">
    <property type="entry name" value="CARRIER"/>
    <property type="match status" value="1"/>
</dbReference>
<dbReference type="PROSITE" id="PS00012">
    <property type="entry name" value="PHOSPHOPANTETHEINE"/>
    <property type="match status" value="1"/>
</dbReference>
<organism>
    <name type="scientific">Wigglesworthia glossinidia brevipalpis</name>
    <dbReference type="NCBI Taxonomy" id="36870"/>
    <lineage>
        <taxon>Bacteria</taxon>
        <taxon>Pseudomonadati</taxon>
        <taxon>Pseudomonadota</taxon>
        <taxon>Gammaproteobacteria</taxon>
        <taxon>Enterobacterales</taxon>
        <taxon>Erwiniaceae</taxon>
        <taxon>Wigglesworthia</taxon>
    </lineage>
</organism>
<reference key="1">
    <citation type="journal article" date="2002" name="Nat. Genet.">
        <title>Genome sequence of the endocellular obligate symbiont of tsetse flies, Wigglesworthia glossinidia.</title>
        <authorList>
            <person name="Akman L."/>
            <person name="Yamashita A."/>
            <person name="Watanabe H."/>
            <person name="Oshima K."/>
            <person name="Shiba T."/>
            <person name="Hattori M."/>
            <person name="Aksoy S."/>
        </authorList>
    </citation>
    <scope>NUCLEOTIDE SEQUENCE [LARGE SCALE GENOMIC DNA]</scope>
</reference>
<proteinExistence type="inferred from homology"/>
<feature type="chain" id="PRO_0000180219" description="Acyl carrier protein">
    <location>
        <begin position="1"/>
        <end position="78"/>
    </location>
</feature>
<feature type="domain" description="Carrier" evidence="2">
    <location>
        <begin position="2"/>
        <end position="77"/>
    </location>
</feature>
<feature type="modified residue" description="O-(pantetheine 4'-phosphoryl)serine" evidence="2">
    <location>
        <position position="37"/>
    </location>
</feature>
<gene>
    <name evidence="1" type="primary">acpP</name>
    <name type="ordered locus">WIGBR0920</name>
</gene>
<keyword id="KW-0963">Cytoplasm</keyword>
<keyword id="KW-0275">Fatty acid biosynthesis</keyword>
<keyword id="KW-0276">Fatty acid metabolism</keyword>
<keyword id="KW-0444">Lipid biosynthesis</keyword>
<keyword id="KW-0443">Lipid metabolism</keyword>
<keyword id="KW-0596">Phosphopantetheine</keyword>
<keyword id="KW-0597">Phosphoprotein</keyword>
<keyword id="KW-1185">Reference proteome</keyword>
<protein>
    <recommendedName>
        <fullName evidence="1">Acyl carrier protein</fullName>
        <shortName evidence="1">ACP</shortName>
    </recommendedName>
</protein>
<name>ACP_WIGBR</name>